<sequence>MYMIESKGGAIACMLLALLFLGTWPAIMTLTERRGRLPQHTYLDYTLTNLLAAVIIALTLGEIGPSRPNFFTQLSQDNWQSVMFAMAGGIVLSLGNLATQYAWAYVGLSVTEVITASITVVIGTTLNYFLDDRINRAEVLFPGVACFLIAVCFGSAVHKSNAADNKTKLQNFKSLETTSSFEMETISASNGLTKGKAKEGTAAFLIELEKQRAIKVFGKSTIIGLVITFFAGICFSLFSPAFNLATNDQWHTLKHGVPKLNVYTAFFYFSISAFVVALILNIRFLYWPILGLPRSSFKAYLNDWNGRGWSFLAGFLCGFGNGLQFMGGQAAGYAAADAVQALPLVSTFWGILLFGEYRRSSRKTYTLLISMLLMFIVAVAVLMASSGHRK</sequence>
<gene>
    <name evidence="6" type="primary">UPS1</name>
    <name evidence="8" type="ordered locus">At2g03590</name>
    <name evidence="9" type="ORF">F19B11.4</name>
</gene>
<reference key="1">
    <citation type="journal article" date="1999" name="Nature">
        <title>Sequence and analysis of chromosome 2 of the plant Arabidopsis thaliana.</title>
        <authorList>
            <person name="Lin X."/>
            <person name="Kaul S."/>
            <person name="Rounsley S.D."/>
            <person name="Shea T.P."/>
            <person name="Benito M.-I."/>
            <person name="Town C.D."/>
            <person name="Fujii C.Y."/>
            <person name="Mason T.M."/>
            <person name="Bowman C.L."/>
            <person name="Barnstead M.E."/>
            <person name="Feldblyum T.V."/>
            <person name="Buell C.R."/>
            <person name="Ketchum K.A."/>
            <person name="Lee J.J."/>
            <person name="Ronning C.M."/>
            <person name="Koo H.L."/>
            <person name="Moffat K.S."/>
            <person name="Cronin L.A."/>
            <person name="Shen M."/>
            <person name="Pai G."/>
            <person name="Van Aken S."/>
            <person name="Umayam L."/>
            <person name="Tallon L.J."/>
            <person name="Gill J.E."/>
            <person name="Adams M.D."/>
            <person name="Carrera A.J."/>
            <person name="Creasy T.H."/>
            <person name="Goodman H.M."/>
            <person name="Somerville C.R."/>
            <person name="Copenhaver G.P."/>
            <person name="Preuss D."/>
            <person name="Nierman W.C."/>
            <person name="White O."/>
            <person name="Eisen J.A."/>
            <person name="Salzberg S.L."/>
            <person name="Fraser C.M."/>
            <person name="Venter J.C."/>
        </authorList>
    </citation>
    <scope>NUCLEOTIDE SEQUENCE [LARGE SCALE GENOMIC DNA]</scope>
    <source>
        <strain>cv. Columbia</strain>
    </source>
</reference>
<reference key="2">
    <citation type="journal article" date="2017" name="Plant J.">
        <title>Araport11: a complete reannotation of the Arabidopsis thaliana reference genome.</title>
        <authorList>
            <person name="Cheng C.Y."/>
            <person name="Krishnakumar V."/>
            <person name="Chan A.P."/>
            <person name="Thibaud-Nissen F."/>
            <person name="Schobel S."/>
            <person name="Town C.D."/>
        </authorList>
    </citation>
    <scope>GENOME REANNOTATION</scope>
    <source>
        <strain>cv. Columbia</strain>
    </source>
</reference>
<reference key="3">
    <citation type="submission" date="2006-07" db="EMBL/GenBank/DDBJ databases">
        <title>Large-scale analysis of RIKEN Arabidopsis full-length (RAFL) cDNAs.</title>
        <authorList>
            <person name="Totoki Y."/>
            <person name="Seki M."/>
            <person name="Ishida J."/>
            <person name="Nakajima M."/>
            <person name="Enju A."/>
            <person name="Kamiya A."/>
            <person name="Narusaka M."/>
            <person name="Shin-i T."/>
            <person name="Nakagawa M."/>
            <person name="Sakamoto N."/>
            <person name="Oishi K."/>
            <person name="Kohara Y."/>
            <person name="Kobayashi M."/>
            <person name="Toyoda A."/>
            <person name="Sakaki Y."/>
            <person name="Sakurai T."/>
            <person name="Iida K."/>
            <person name="Akiyama K."/>
            <person name="Satou M."/>
            <person name="Toyoda T."/>
            <person name="Konagaya A."/>
            <person name="Carninci P."/>
            <person name="Kawai J."/>
            <person name="Hayashizaki Y."/>
            <person name="Shinozaki K."/>
        </authorList>
    </citation>
    <scope>NUCLEOTIDE SEQUENCE [LARGE SCALE MRNA]</scope>
    <source>
        <strain>cv. Columbia</strain>
    </source>
</reference>
<reference key="4">
    <citation type="submission" date="2006-10" db="EMBL/GenBank/DDBJ databases">
        <title>Arabidopsis ORF Clone.</title>
        <authorList>
            <person name="Bautista V.R."/>
            <person name="Kim C.J."/>
            <person name="Chen H."/>
            <person name="Quinitio C."/>
            <person name="Ecker J.R."/>
        </authorList>
    </citation>
    <scope>NUCLEOTIDE SEQUENCE [LARGE SCALE MRNA]</scope>
    <source>
        <strain>cv. Columbia</strain>
    </source>
</reference>
<reference key="5">
    <citation type="submission" date="2002-03" db="EMBL/GenBank/DDBJ databases">
        <title>Full-length cDNA from Arabidopsis thaliana.</title>
        <authorList>
            <person name="Brover V.V."/>
            <person name="Troukhan M.E."/>
            <person name="Alexandrov N.A."/>
            <person name="Lu Y.-P."/>
            <person name="Flavell R.B."/>
            <person name="Feldmann K.A."/>
        </authorList>
    </citation>
    <scope>NUCLEOTIDE SEQUENCE [LARGE SCALE MRNA]</scope>
</reference>
<reference key="6">
    <citation type="journal article" date="2002" name="Plant Cell">
        <title>A novel superfamily of transporters for allantoin and other oxo derivatives of nitrogen heterocyclic compounds in Arabidopsis.</title>
        <authorList>
            <person name="Desimone M."/>
            <person name="Catoni E."/>
            <person name="Ludewig U."/>
            <person name="Hilpert M."/>
            <person name="Schneider A."/>
            <person name="Kunze R."/>
            <person name="Tegeder M."/>
            <person name="Frommer W.B."/>
            <person name="Schumacher K."/>
        </authorList>
    </citation>
    <scope>FUNCTION</scope>
    <scope>BIOPHYSICOCHEMICAL PROPERTIES</scope>
    <scope>TISSUE SPECIFICITY</scope>
    <scope>INDUCTION</scope>
    <scope>GENE FAMILY</scope>
    <scope>NOMENCLATURE</scope>
    <source>
        <strain>cv. Columbia</strain>
    </source>
</reference>
<reference key="7">
    <citation type="journal article" date="2004" name="J. Biol. Chem.">
        <title>UPS1 and UPS2 from Arabidopsis mediate high affinity transport of uracil and 5-fluorouracil.</title>
        <authorList>
            <person name="Schmidt A."/>
            <person name="Su Y.H."/>
            <person name="Kunze R."/>
            <person name="Warner S."/>
            <person name="Hewitt M."/>
            <person name="Slocum R.D."/>
            <person name="Ludewig U."/>
            <person name="Frommer W.B."/>
            <person name="Desimone M."/>
        </authorList>
    </citation>
    <scope>FUNCTION</scope>
    <scope>BIOPHYSICOCHEMICAL PROPERTIES</scope>
    <scope>DEVELOPMENTAL STAGE</scope>
</reference>
<reference key="8">
    <citation type="journal article" date="2006" name="Biotechnol. J.">
        <title>Heterologous expression of a plant uracil transporter in yeast: improvement of plasma membrane targeting in mutants of the Rsp5p ubiquitin protein ligase.</title>
        <authorList>
            <person name="Froissard M."/>
            <person name="Belgareh-Touze N."/>
            <person name="Buisson N."/>
            <person name="Desimone M."/>
            <person name="Frommer W.B."/>
            <person name="Haguenauer-Tsapis R."/>
        </authorList>
    </citation>
    <scope>FUNCTION</scope>
</reference>
<reference key="9">
    <citation type="journal article" date="2006" name="Planta">
        <title>Comparative studies on Ureide Permeases in Arabidopsis thaliana and analysis of two alternative splice variants of AtUPS5.</title>
        <authorList>
            <person name="Schmidt A."/>
            <person name="Baumann N."/>
            <person name="Schwarzkopf A."/>
            <person name="Frommer W.B."/>
            <person name="Desimone M."/>
        </authorList>
    </citation>
    <scope>BIOPHYSICOCHEMICAL PROPERTIES</scope>
</reference>
<proteinExistence type="evidence at protein level"/>
<organism>
    <name type="scientific">Arabidopsis thaliana</name>
    <name type="common">Mouse-ear cress</name>
    <dbReference type="NCBI Taxonomy" id="3702"/>
    <lineage>
        <taxon>Eukaryota</taxon>
        <taxon>Viridiplantae</taxon>
        <taxon>Streptophyta</taxon>
        <taxon>Embryophyta</taxon>
        <taxon>Tracheophyta</taxon>
        <taxon>Spermatophyta</taxon>
        <taxon>Magnoliopsida</taxon>
        <taxon>eudicotyledons</taxon>
        <taxon>Gunneridae</taxon>
        <taxon>Pentapetalae</taxon>
        <taxon>rosids</taxon>
        <taxon>malvids</taxon>
        <taxon>Brassicales</taxon>
        <taxon>Brassicaceae</taxon>
        <taxon>Camelineae</taxon>
        <taxon>Arabidopsis</taxon>
    </lineage>
</organism>
<evidence type="ECO:0000255" key="1"/>
<evidence type="ECO:0000269" key="2">
    <source>
    </source>
</evidence>
<evidence type="ECO:0000269" key="3">
    <source>
    </source>
</evidence>
<evidence type="ECO:0000269" key="4">
    <source>
    </source>
</evidence>
<evidence type="ECO:0000269" key="5">
    <source>
    </source>
</evidence>
<evidence type="ECO:0000303" key="6">
    <source>
    </source>
</evidence>
<evidence type="ECO:0000305" key="7"/>
<evidence type="ECO:0000312" key="8">
    <source>
        <dbReference type="Araport" id="AT2G03590"/>
    </source>
</evidence>
<evidence type="ECO:0000312" key="9">
    <source>
        <dbReference type="EMBL" id="AAD20067.1"/>
    </source>
</evidence>
<dbReference type="EMBL" id="AC006836">
    <property type="protein sequence ID" value="AAD20067.1"/>
    <property type="molecule type" value="Genomic_DNA"/>
</dbReference>
<dbReference type="EMBL" id="CP002685">
    <property type="protein sequence ID" value="AEC05718.1"/>
    <property type="molecule type" value="Genomic_DNA"/>
</dbReference>
<dbReference type="EMBL" id="CP002685">
    <property type="protein sequence ID" value="ANM62801.1"/>
    <property type="molecule type" value="Genomic_DNA"/>
</dbReference>
<dbReference type="EMBL" id="AK229277">
    <property type="protein sequence ID" value="BAF01141.1"/>
    <property type="molecule type" value="mRNA"/>
</dbReference>
<dbReference type="EMBL" id="BT029190">
    <property type="protein sequence ID" value="ABJ17125.1"/>
    <property type="molecule type" value="mRNA"/>
</dbReference>
<dbReference type="EMBL" id="AY085962">
    <property type="protein sequence ID" value="AAM63172.1"/>
    <property type="molecule type" value="mRNA"/>
</dbReference>
<dbReference type="PIR" id="C84450">
    <property type="entry name" value="C84450"/>
</dbReference>
<dbReference type="RefSeq" id="NP_001324930.1">
    <property type="nucleotide sequence ID" value="NM_001335192.1"/>
</dbReference>
<dbReference type="RefSeq" id="NP_565303.1">
    <property type="nucleotide sequence ID" value="NM_126409.4"/>
</dbReference>
<dbReference type="BioGRID" id="289">
    <property type="interactions" value="7"/>
</dbReference>
<dbReference type="IntAct" id="Q9ZPR7">
    <property type="interactions" value="7"/>
</dbReference>
<dbReference type="STRING" id="3702.Q9ZPR7"/>
<dbReference type="TCDB" id="2.A.7.19.2">
    <property type="family name" value="the drug/metabolite transporter (dmt) superfamily"/>
</dbReference>
<dbReference type="MetOSite" id="Q9ZPR7"/>
<dbReference type="PaxDb" id="3702-AT2G03590.1"/>
<dbReference type="EnsemblPlants" id="AT2G03590.1">
    <property type="protein sequence ID" value="AT2G03590.1"/>
    <property type="gene ID" value="AT2G03590"/>
</dbReference>
<dbReference type="EnsemblPlants" id="AT2G03590.2">
    <property type="protein sequence ID" value="AT2G03590.2"/>
    <property type="gene ID" value="AT2G03590"/>
</dbReference>
<dbReference type="GeneID" id="814888"/>
<dbReference type="Gramene" id="AT2G03590.1">
    <property type="protein sequence ID" value="AT2G03590.1"/>
    <property type="gene ID" value="AT2G03590"/>
</dbReference>
<dbReference type="Gramene" id="AT2G03590.2">
    <property type="protein sequence ID" value="AT2G03590.2"/>
    <property type="gene ID" value="AT2G03590"/>
</dbReference>
<dbReference type="KEGG" id="ath:AT2G03590"/>
<dbReference type="Araport" id="AT2G03590"/>
<dbReference type="TAIR" id="AT2G03590">
    <property type="gene designation" value="UPS1"/>
</dbReference>
<dbReference type="eggNOG" id="ENOG502QUAA">
    <property type="taxonomic scope" value="Eukaryota"/>
</dbReference>
<dbReference type="HOGENOM" id="CLU_051261_0_0_1"/>
<dbReference type="InParanoid" id="Q9ZPR7"/>
<dbReference type="OMA" id="ELFYWDY"/>
<dbReference type="PhylomeDB" id="Q9ZPR7"/>
<dbReference type="SABIO-RK" id="Q9ZPR7"/>
<dbReference type="PRO" id="PR:Q9ZPR7"/>
<dbReference type="Proteomes" id="UP000006548">
    <property type="component" value="Chromosome 2"/>
</dbReference>
<dbReference type="ExpressionAtlas" id="Q9ZPR7">
    <property type="expression patterns" value="baseline and differential"/>
</dbReference>
<dbReference type="GO" id="GO:0016020">
    <property type="term" value="C:membrane"/>
    <property type="evidence" value="ECO:0007669"/>
    <property type="project" value="UniProtKB-SubCell"/>
</dbReference>
<dbReference type="GO" id="GO:0005274">
    <property type="term" value="F:allantoin:proton symporter activity"/>
    <property type="evidence" value="ECO:0000314"/>
    <property type="project" value="TAIR"/>
</dbReference>
<dbReference type="GO" id="GO:0005524">
    <property type="term" value="F:ATP binding"/>
    <property type="evidence" value="ECO:0007669"/>
    <property type="project" value="UniProtKB-KW"/>
</dbReference>
<dbReference type="GO" id="GO:0015210">
    <property type="term" value="F:uracil transmembrane transporter activity"/>
    <property type="evidence" value="ECO:0000314"/>
    <property type="project" value="UniProtKB"/>
</dbReference>
<dbReference type="GO" id="GO:0015720">
    <property type="term" value="P:allantoin transport"/>
    <property type="evidence" value="ECO:0000314"/>
    <property type="project" value="TAIR"/>
</dbReference>
<dbReference type="GO" id="GO:0043100">
    <property type="term" value="P:pyrimidine nucleobase salvage"/>
    <property type="evidence" value="ECO:0000304"/>
    <property type="project" value="UniProtKB"/>
</dbReference>
<dbReference type="GO" id="GO:0015857">
    <property type="term" value="P:uracil transport"/>
    <property type="evidence" value="ECO:0000314"/>
    <property type="project" value="UniProtKB"/>
</dbReference>
<dbReference type="InterPro" id="IPR030189">
    <property type="entry name" value="UPS_plant"/>
</dbReference>
<dbReference type="InterPro" id="IPR009834">
    <property type="entry name" value="Ureide_permease"/>
</dbReference>
<dbReference type="PANTHER" id="PTHR31081:SF5">
    <property type="entry name" value="UREIDE PERMEASE 1-RELATED"/>
    <property type="match status" value="1"/>
</dbReference>
<dbReference type="PANTHER" id="PTHR31081">
    <property type="entry name" value="UREIDE PERMEASE 1-RELATED-RELATED"/>
    <property type="match status" value="1"/>
</dbReference>
<dbReference type="Pfam" id="PF07168">
    <property type="entry name" value="Ureide_permease"/>
    <property type="match status" value="1"/>
</dbReference>
<keyword id="KW-0067">ATP-binding</keyword>
<keyword id="KW-0472">Membrane</keyword>
<keyword id="KW-0547">Nucleotide-binding</keyword>
<keyword id="KW-1185">Reference proteome</keyword>
<keyword id="KW-0812">Transmembrane</keyword>
<keyword id="KW-1133">Transmembrane helix</keyword>
<keyword id="KW-0813">Transport</keyword>
<protein>
    <recommendedName>
        <fullName evidence="6">Ureide permease 1</fullName>
        <shortName evidence="6">AtUPS1</shortName>
    </recommendedName>
</protein>
<feature type="chain" id="PRO_0000221645" description="Ureide permease 1">
    <location>
        <begin position="1"/>
        <end position="390"/>
    </location>
</feature>
<feature type="topological domain" description="Extracellular" evidence="1">
    <location>
        <begin position="1"/>
        <end position="9"/>
    </location>
</feature>
<feature type="transmembrane region" description="Helical" evidence="1">
    <location>
        <begin position="10"/>
        <end position="30"/>
    </location>
</feature>
<feature type="topological domain" description="Cytoplasmic" evidence="1">
    <location>
        <begin position="31"/>
        <end position="44"/>
    </location>
</feature>
<feature type="transmembrane region" description="Helical" evidence="1">
    <location>
        <begin position="45"/>
        <end position="65"/>
    </location>
</feature>
<feature type="topological domain" description="Extracellular" evidence="1">
    <location>
        <begin position="66"/>
        <end position="78"/>
    </location>
</feature>
<feature type="transmembrane region" description="Helical" evidence="1">
    <location>
        <begin position="79"/>
        <end position="99"/>
    </location>
</feature>
<feature type="topological domain" description="Cytoplasmic" evidence="1">
    <location>
        <begin position="100"/>
        <end position="101"/>
    </location>
</feature>
<feature type="transmembrane region" description="Helical" evidence="1">
    <location>
        <begin position="102"/>
        <end position="122"/>
    </location>
</feature>
<feature type="topological domain" description="Extracellular" evidence="1">
    <location>
        <begin position="123"/>
        <end position="136"/>
    </location>
</feature>
<feature type="transmembrane region" description="Helical" evidence="1">
    <location>
        <begin position="137"/>
        <end position="157"/>
    </location>
</feature>
<feature type="topological domain" description="Cytoplasmic" evidence="1">
    <location>
        <begin position="158"/>
        <end position="221"/>
    </location>
</feature>
<feature type="transmembrane region" description="Helical" evidence="1">
    <location>
        <begin position="222"/>
        <end position="242"/>
    </location>
</feature>
<feature type="topological domain" description="Extracellular" evidence="1">
    <location>
        <begin position="243"/>
        <end position="261"/>
    </location>
</feature>
<feature type="transmembrane region" description="Helical" evidence="1">
    <location>
        <begin position="262"/>
        <end position="282"/>
    </location>
</feature>
<feature type="topological domain" description="Cytoplasmic" evidence="1">
    <location>
        <begin position="283"/>
        <end position="307"/>
    </location>
</feature>
<feature type="transmembrane region" description="Helical" evidence="1">
    <location>
        <begin position="308"/>
        <end position="328"/>
    </location>
</feature>
<feature type="topological domain" description="Extracellular" evidence="1">
    <location>
        <begin position="329"/>
        <end position="333"/>
    </location>
</feature>
<feature type="transmembrane region" description="Helical" evidence="1">
    <location>
        <begin position="334"/>
        <end position="354"/>
    </location>
</feature>
<feature type="topological domain" description="Cytoplasmic" evidence="1">
    <location>
        <begin position="355"/>
        <end position="363"/>
    </location>
</feature>
<feature type="transmembrane region" description="Helical" evidence="1">
    <location>
        <begin position="364"/>
        <end position="384"/>
    </location>
</feature>
<feature type="topological domain" description="Extracellular" evidence="1">
    <location>
        <begin position="385"/>
        <end position="390"/>
    </location>
</feature>
<feature type="binding site" evidence="1">
    <location>
        <begin position="213"/>
        <end position="220"/>
    </location>
    <ligand>
        <name>ATP</name>
        <dbReference type="ChEBI" id="CHEBI:30616"/>
    </ligand>
</feature>
<feature type="sequence conflict" description="In Ref. 3; BAF01141." evidence="7" ref="3">
    <original>N</original>
    <variation>D</variation>
    <location>
        <position position="321"/>
    </location>
</feature>
<comment type="function">
    <text evidence="2 3 5">Proton-coupled transporter that transports a wide spectrum of oxo derivatives of heterocyclic nitrogen compounds, including allantoin, uric acid and xanthine, but not adenine (PubMed:11971139, PubMed:15308648). Mediates high affinity transport of uracil and 5-fluorouracil (a toxic uracil analog) (PubMed:15308648, PubMed:16897711). Mediates transport of free pyrimidines and may function during early seedling development in salvage pathways, by the utilization of pyrimidines from seed storage tissue (PubMed:15308648).</text>
</comment>
<comment type="biophysicochemical properties">
    <kinetics>
        <KM evidence="2">52 uM for allantoin</KM>
        <KM evidence="3">75 uM for allantoin</KM>
        <KM evidence="3">5.9 uM for uracil</KM>
        <KM evidence="4">7 uM for xanthine</KM>
    </kinetics>
    <phDependence>
        <text evidence="2">Optimum pH is 4.75.</text>
    </phDependence>
</comment>
<comment type="subcellular location">
    <subcellularLocation>
        <location evidence="1">Membrane</location>
        <topology evidence="1">Multi-pass membrane protein</topology>
    </subcellularLocation>
</comment>
<comment type="tissue specificity">
    <text evidence="2">Expressed in leaves, flowers, roots and stems.</text>
</comment>
<comment type="developmental stage">
    <text evidence="3">During seedling development, expression is high at 1 day after imbibition and then declines continuously to reach steady levels after 5 days.</text>
</comment>
<comment type="induction">
    <text evidence="2">By nitrogen deficiency.</text>
</comment>
<comment type="similarity">
    <text evidence="7">Belongs to the plant ureide permease (TC 2.A.7.19) family.</text>
</comment>
<accession>Q9ZPR7</accession>
<accession>Q058M8</accession>
<accession>Q0WP08</accession>
<name>UPS1_ARATH</name>